<sequence length="243" mass="25642">MFNPNNGSEFARNRARLDDTPNPYEPEVGSLPEGDRSQAGSDTVNKTGTTIVGLTTQDGVLMASDMRASLGGRVISNKNVQKVEEIQPNAALSISGSVGGAQSFIRSLRAEANLYEARRGEYMSIDALSTMASNLLRGGPFFRVVPILGGVDDDGGHVFSLDPAGSSMSDTYTAQGSGMPYALGVLEQEYSEDLTMADAEQVAAHAVKSASERDTASGNGIHITKITHDGLTTVGHKEFDALL</sequence>
<keyword id="KW-0068">Autocatalytic cleavage</keyword>
<keyword id="KW-0963">Cytoplasm</keyword>
<keyword id="KW-0378">Hydrolase</keyword>
<keyword id="KW-0645">Protease</keyword>
<keyword id="KW-0647">Proteasome</keyword>
<keyword id="KW-0888">Threonine protease</keyword>
<keyword id="KW-0865">Zymogen</keyword>
<protein>
    <recommendedName>
        <fullName evidence="1">Proteasome subunit beta</fullName>
        <ecNumber evidence="1">3.4.25.1</ecNumber>
    </recommendedName>
    <alternativeName>
        <fullName evidence="1">20S proteasome beta subunit</fullName>
    </alternativeName>
    <alternativeName>
        <fullName evidence="1">Proteasome core protein PsmB</fullName>
    </alternativeName>
</protein>
<reference key="1">
    <citation type="journal article" date="2008" name="Genomics">
        <title>Evolution in the laboratory: the genome of Halobacterium salinarum strain R1 compared to that of strain NRC-1.</title>
        <authorList>
            <person name="Pfeiffer F."/>
            <person name="Schuster S.C."/>
            <person name="Broicher A."/>
            <person name="Falb M."/>
            <person name="Palm P."/>
            <person name="Rodewald K."/>
            <person name="Ruepp A."/>
            <person name="Soppa J."/>
            <person name="Tittor J."/>
            <person name="Oesterhelt D."/>
        </authorList>
    </citation>
    <scope>NUCLEOTIDE SEQUENCE [LARGE SCALE GENOMIC DNA]</scope>
    <source>
        <strain>ATCC 29341 / DSM 671 / R1</strain>
    </source>
</reference>
<gene>
    <name evidence="1" type="primary">psmB</name>
    <name type="ordered locus">OE_2296F</name>
</gene>
<feature type="propeptide" id="PRO_0000397300" description="Removed in mature form; by autocatalysis" evidence="1">
    <location>
        <begin position="1"/>
        <end position="48"/>
    </location>
</feature>
<feature type="chain" id="PRO_0000397301" description="Proteasome subunit beta">
    <location>
        <begin position="49"/>
        <end position="243"/>
    </location>
</feature>
<feature type="region of interest" description="Disordered" evidence="2">
    <location>
        <begin position="1"/>
        <end position="46"/>
    </location>
</feature>
<feature type="active site" description="Nucleophile" evidence="1">
    <location>
        <position position="49"/>
    </location>
</feature>
<proteinExistence type="inferred from homology"/>
<accession>B0R4C8</accession>
<name>PSB_HALS3</name>
<comment type="function">
    <text evidence="1">Component of the proteasome core, a large protease complex with broad specificity involved in protein degradation.</text>
</comment>
<comment type="catalytic activity">
    <reaction evidence="1">
        <text>Cleavage of peptide bonds with very broad specificity.</text>
        <dbReference type="EC" id="3.4.25.1"/>
    </reaction>
</comment>
<comment type="activity regulation">
    <text evidence="1">The formation of the proteasomal ATPase PAN-20S proteasome complex, via the docking of the C-termini of PAN into the intersubunit pockets in the alpha-rings, triggers opening of the gate for substrate entry. Interconversion between the open-gate and close-gate conformations leads to a dynamic regulation of the 20S proteasome proteolysis activity.</text>
</comment>
<comment type="subunit">
    <text evidence="1">The 20S proteasome core is composed of 14 alpha and 14 beta subunits that assemble into four stacked heptameric rings, resulting in a barrel-shaped structure. The two inner rings, each composed of seven catalytic beta subunits, are sandwiched by two outer rings, each composed of seven alpha subunits. The catalytic chamber with the active sites is on the inside of the barrel. Has a gated structure, the ends of the cylinder being occluded by the N-termini of the alpha-subunits. Is capped at one or both ends by the proteasome regulatory ATPase, PAN.</text>
</comment>
<comment type="subcellular location">
    <subcellularLocation>
        <location evidence="1">Cytoplasm</location>
    </subcellularLocation>
</comment>
<comment type="similarity">
    <text evidence="1">Belongs to the peptidase T1B family.</text>
</comment>
<dbReference type="EC" id="3.4.25.1" evidence="1"/>
<dbReference type="EMBL" id="AM774415">
    <property type="protein sequence ID" value="CAP13593.1"/>
    <property type="molecule type" value="Genomic_DNA"/>
</dbReference>
<dbReference type="RefSeq" id="WP_012289244.1">
    <property type="nucleotide sequence ID" value="NC_010364.1"/>
</dbReference>
<dbReference type="SMR" id="B0R4C8"/>
<dbReference type="MEROPS" id="T01.002"/>
<dbReference type="EnsemblBacteria" id="CAP13593">
    <property type="protein sequence ID" value="CAP13593"/>
    <property type="gene ID" value="OE_2296F"/>
</dbReference>
<dbReference type="GeneID" id="89349294"/>
<dbReference type="KEGG" id="hsl:OE_2296F"/>
<dbReference type="HOGENOM" id="CLU_035750_7_2_2"/>
<dbReference type="PhylomeDB" id="B0R4C8"/>
<dbReference type="Proteomes" id="UP000001321">
    <property type="component" value="Chromosome"/>
</dbReference>
<dbReference type="GO" id="GO:0005737">
    <property type="term" value="C:cytoplasm"/>
    <property type="evidence" value="ECO:0007669"/>
    <property type="project" value="UniProtKB-SubCell"/>
</dbReference>
<dbReference type="GO" id="GO:0019774">
    <property type="term" value="C:proteasome core complex, beta-subunit complex"/>
    <property type="evidence" value="ECO:0007669"/>
    <property type="project" value="UniProtKB-UniRule"/>
</dbReference>
<dbReference type="GO" id="GO:0004298">
    <property type="term" value="F:threonine-type endopeptidase activity"/>
    <property type="evidence" value="ECO:0007669"/>
    <property type="project" value="UniProtKB-UniRule"/>
</dbReference>
<dbReference type="GO" id="GO:0010498">
    <property type="term" value="P:proteasomal protein catabolic process"/>
    <property type="evidence" value="ECO:0007669"/>
    <property type="project" value="UniProtKB-UniRule"/>
</dbReference>
<dbReference type="FunFam" id="3.60.20.10:FF:000049">
    <property type="entry name" value="Proteasome subunit beta"/>
    <property type="match status" value="1"/>
</dbReference>
<dbReference type="Gene3D" id="3.60.20.10">
    <property type="entry name" value="Glutamine Phosphoribosylpyrophosphate, subunit 1, domain 1"/>
    <property type="match status" value="1"/>
</dbReference>
<dbReference type="HAMAP" id="MF_02113_A">
    <property type="entry name" value="Proteasome_B_A"/>
    <property type="match status" value="1"/>
</dbReference>
<dbReference type="InterPro" id="IPR029055">
    <property type="entry name" value="Ntn_hydrolases_N"/>
</dbReference>
<dbReference type="InterPro" id="IPR019983">
    <property type="entry name" value="Pept_T1A_Psome_bsu_arc"/>
</dbReference>
<dbReference type="InterPro" id="IPR000243">
    <property type="entry name" value="Pept_T1A_subB"/>
</dbReference>
<dbReference type="InterPro" id="IPR001353">
    <property type="entry name" value="Proteasome_sua/b"/>
</dbReference>
<dbReference type="InterPro" id="IPR023333">
    <property type="entry name" value="Proteasome_suB-type"/>
</dbReference>
<dbReference type="NCBIfam" id="TIGR03634">
    <property type="entry name" value="arc_protsome_B"/>
    <property type="match status" value="1"/>
</dbReference>
<dbReference type="PANTHER" id="PTHR32194:SF0">
    <property type="entry name" value="ATP-DEPENDENT PROTEASE SUBUNIT HSLV"/>
    <property type="match status" value="1"/>
</dbReference>
<dbReference type="PANTHER" id="PTHR32194">
    <property type="entry name" value="METALLOPROTEASE TLDD"/>
    <property type="match status" value="1"/>
</dbReference>
<dbReference type="Pfam" id="PF00227">
    <property type="entry name" value="Proteasome"/>
    <property type="match status" value="1"/>
</dbReference>
<dbReference type="PRINTS" id="PR00141">
    <property type="entry name" value="PROTEASOME"/>
</dbReference>
<dbReference type="SUPFAM" id="SSF56235">
    <property type="entry name" value="N-terminal nucleophile aminohydrolases (Ntn hydrolases)"/>
    <property type="match status" value="1"/>
</dbReference>
<dbReference type="PROSITE" id="PS51476">
    <property type="entry name" value="PROTEASOME_BETA_2"/>
    <property type="match status" value="1"/>
</dbReference>
<evidence type="ECO:0000255" key="1">
    <source>
        <dbReference type="HAMAP-Rule" id="MF_02113"/>
    </source>
</evidence>
<evidence type="ECO:0000256" key="2">
    <source>
        <dbReference type="SAM" id="MobiDB-lite"/>
    </source>
</evidence>
<organism>
    <name type="scientific">Halobacterium salinarum (strain ATCC 29341 / DSM 671 / R1)</name>
    <dbReference type="NCBI Taxonomy" id="478009"/>
    <lineage>
        <taxon>Archaea</taxon>
        <taxon>Methanobacteriati</taxon>
        <taxon>Methanobacteriota</taxon>
        <taxon>Stenosarchaea group</taxon>
        <taxon>Halobacteria</taxon>
        <taxon>Halobacteriales</taxon>
        <taxon>Halobacteriaceae</taxon>
        <taxon>Halobacterium</taxon>
        <taxon>Halobacterium salinarum NRC-34001</taxon>
    </lineage>
</organism>